<sequence length="330" mass="35966">MAYHTPFAAQPPVASSGLPLTLISLDDWALVTLTGADRVKYLQGQVTADIDALSADQHVLCAHCDAKGKMWSNLRLFYRGEGLAFIERRSLLDNQLSELKKYAVFSKVVIEPQPDAVLIGVAGSQAKTALAEIFTELPSAEHPVTQMGNSTLLHFSLPAERFLLVTDTEQAQQLVEKLAGRAQFNDSKQWLALDIEAGFPIIDAANSAQFIPQATNIQALNGISFTKGCYTGQEMVARAKYRGANKRALYWLAGNASRVPAAGEDLEWQLGENWRRTGTVLSAIQLNDGTVWVQAVLNNDLAADSVLRVRDDALGTLAIQPLPYSLAEDK</sequence>
<name>YGFZ_YERPG</name>
<evidence type="ECO:0000255" key="1">
    <source>
        <dbReference type="HAMAP-Rule" id="MF_01175"/>
    </source>
</evidence>
<organism>
    <name type="scientific">Yersinia pestis bv. Antiqua (strain Angola)</name>
    <dbReference type="NCBI Taxonomy" id="349746"/>
    <lineage>
        <taxon>Bacteria</taxon>
        <taxon>Pseudomonadati</taxon>
        <taxon>Pseudomonadota</taxon>
        <taxon>Gammaproteobacteria</taxon>
        <taxon>Enterobacterales</taxon>
        <taxon>Yersiniaceae</taxon>
        <taxon>Yersinia</taxon>
    </lineage>
</organism>
<keyword id="KW-0963">Cytoplasm</keyword>
<keyword id="KW-0290">Folate-binding</keyword>
<keyword id="KW-0819">tRNA processing</keyword>
<accession>A9R4L4</accession>
<reference key="1">
    <citation type="journal article" date="2010" name="J. Bacteriol.">
        <title>Genome sequence of the deep-rooted Yersinia pestis strain Angola reveals new insights into the evolution and pangenome of the plague bacterium.</title>
        <authorList>
            <person name="Eppinger M."/>
            <person name="Worsham P.L."/>
            <person name="Nikolich M.P."/>
            <person name="Riley D.R."/>
            <person name="Sebastian Y."/>
            <person name="Mou S."/>
            <person name="Achtman M."/>
            <person name="Lindler L.E."/>
            <person name="Ravel J."/>
        </authorList>
    </citation>
    <scope>NUCLEOTIDE SEQUENCE [LARGE SCALE GENOMIC DNA]</scope>
    <source>
        <strain>Angola</strain>
    </source>
</reference>
<feature type="chain" id="PRO_1000138090" description="tRNA-modifying protein YgfZ">
    <location>
        <begin position="1"/>
        <end position="330"/>
    </location>
</feature>
<feature type="binding site" evidence="1">
    <location>
        <position position="28"/>
    </location>
    <ligand>
        <name>folate</name>
        <dbReference type="ChEBI" id="CHEBI:62501"/>
    </ligand>
</feature>
<feature type="binding site" evidence="1">
    <location>
        <position position="190"/>
    </location>
    <ligand>
        <name>folate</name>
        <dbReference type="ChEBI" id="CHEBI:62501"/>
    </ligand>
</feature>
<protein>
    <recommendedName>
        <fullName evidence="1">tRNA-modifying protein YgfZ</fullName>
    </recommendedName>
</protein>
<dbReference type="EMBL" id="CP000901">
    <property type="protein sequence ID" value="ABX87731.1"/>
    <property type="molecule type" value="Genomic_DNA"/>
</dbReference>
<dbReference type="SMR" id="A9R4L4"/>
<dbReference type="KEGG" id="ypg:YpAngola_A3840"/>
<dbReference type="PATRIC" id="fig|349746.12.peg.557"/>
<dbReference type="GO" id="GO:0005737">
    <property type="term" value="C:cytoplasm"/>
    <property type="evidence" value="ECO:0007669"/>
    <property type="project" value="UniProtKB-SubCell"/>
</dbReference>
<dbReference type="GO" id="GO:0005542">
    <property type="term" value="F:folic acid binding"/>
    <property type="evidence" value="ECO:0007669"/>
    <property type="project" value="UniProtKB-UniRule"/>
</dbReference>
<dbReference type="GO" id="GO:0016226">
    <property type="term" value="P:iron-sulfur cluster assembly"/>
    <property type="evidence" value="ECO:0007669"/>
    <property type="project" value="TreeGrafter"/>
</dbReference>
<dbReference type="GO" id="GO:0009451">
    <property type="term" value="P:RNA modification"/>
    <property type="evidence" value="ECO:0007669"/>
    <property type="project" value="InterPro"/>
</dbReference>
<dbReference type="GO" id="GO:0008033">
    <property type="term" value="P:tRNA processing"/>
    <property type="evidence" value="ECO:0007669"/>
    <property type="project" value="UniProtKB-UniRule"/>
</dbReference>
<dbReference type="FunFam" id="2.40.30.160:FF:000001">
    <property type="entry name" value="tRNA-modifying protein YgfZ"/>
    <property type="match status" value="1"/>
</dbReference>
<dbReference type="FunFam" id="3.30.70.1400:FF:000002">
    <property type="entry name" value="tRNA-modifying protein YgfZ"/>
    <property type="match status" value="1"/>
</dbReference>
<dbReference type="FunFam" id="3.30.70.1630:FF:000001">
    <property type="entry name" value="tRNA-modifying protein YgfZ"/>
    <property type="match status" value="1"/>
</dbReference>
<dbReference type="Gene3D" id="2.40.30.160">
    <property type="match status" value="1"/>
</dbReference>
<dbReference type="Gene3D" id="3.30.70.1630">
    <property type="match status" value="1"/>
</dbReference>
<dbReference type="Gene3D" id="3.30.70.1400">
    <property type="entry name" value="Aminomethyltransferase beta-barrel domains"/>
    <property type="match status" value="1"/>
</dbReference>
<dbReference type="HAMAP" id="MF_01175">
    <property type="entry name" value="tRNA_modifying_YgfZ"/>
    <property type="match status" value="1"/>
</dbReference>
<dbReference type="InterPro" id="IPR029043">
    <property type="entry name" value="GcvT/YgfZ_C"/>
</dbReference>
<dbReference type="InterPro" id="IPR023758">
    <property type="entry name" value="tRNA-modifying_YgfZ"/>
</dbReference>
<dbReference type="InterPro" id="IPR045179">
    <property type="entry name" value="YgfZ/GcvT"/>
</dbReference>
<dbReference type="InterPro" id="IPR017703">
    <property type="entry name" value="YgfZ/GcvT_CS"/>
</dbReference>
<dbReference type="InterPro" id="IPR048451">
    <property type="entry name" value="YgfZ_barrel"/>
</dbReference>
<dbReference type="NCBIfam" id="NF007110">
    <property type="entry name" value="PRK09559.1"/>
    <property type="match status" value="1"/>
</dbReference>
<dbReference type="NCBIfam" id="TIGR03317">
    <property type="entry name" value="ygfZ_signature"/>
    <property type="match status" value="1"/>
</dbReference>
<dbReference type="PANTHER" id="PTHR22602">
    <property type="entry name" value="TRANSFERASE CAF17, MITOCHONDRIAL-RELATED"/>
    <property type="match status" value="1"/>
</dbReference>
<dbReference type="PANTHER" id="PTHR22602:SF0">
    <property type="entry name" value="TRANSFERASE CAF17, MITOCHONDRIAL-RELATED"/>
    <property type="match status" value="1"/>
</dbReference>
<dbReference type="Pfam" id="PF21130">
    <property type="entry name" value="YgfZ_barrel"/>
    <property type="match status" value="1"/>
</dbReference>
<dbReference type="SUPFAM" id="SSF101790">
    <property type="entry name" value="Aminomethyltransferase beta-barrel domain"/>
    <property type="match status" value="1"/>
</dbReference>
<dbReference type="SUPFAM" id="SSF103025">
    <property type="entry name" value="Folate-binding domain"/>
    <property type="match status" value="1"/>
</dbReference>
<gene>
    <name type="ordered locus">YpAngola_A3840</name>
</gene>
<comment type="function">
    <text evidence="1">Folate-binding protein involved in regulating the level of ATP-DnaA and in the modification of some tRNAs. It is probably a key factor in regulatory networks that act via tRNA modification, such as initiation of chromosomal replication.</text>
</comment>
<comment type="subcellular location">
    <subcellularLocation>
        <location evidence="1">Cytoplasm</location>
    </subcellularLocation>
</comment>
<comment type="similarity">
    <text evidence="1">Belongs to the tRNA-modifying YgfZ family.</text>
</comment>
<proteinExistence type="inferred from homology"/>